<gene>
    <name evidence="1" type="primary">dnaA</name>
    <name type="ordered locus">SAV0001</name>
</gene>
<comment type="function">
    <text evidence="1">Plays an essential role in the initiation and regulation of chromosomal replication. ATP-DnaA binds to the origin of replication (oriC) to initiate formation of the DNA replication initiation complex once per cell cycle. Binds the DnaA box (a 9 base pair repeat at the origin) and separates the double-stranded (ds)DNA. Forms a right-handed helical filament on oriC DNA; dsDNA binds to the exterior of the filament while single-stranded (ss)DNA is stabiized in the filament's interior. The ATP-DnaA-oriC complex binds and stabilizes one strand of the AT-rich DNA unwinding element (DUE), permitting loading of DNA polymerase. After initiation quickly degrades to an ADP-DnaA complex that is not apt for DNA replication. Binds acidic phospholipids.</text>
</comment>
<comment type="subunit">
    <text evidence="1">Oligomerizes as a right-handed, spiral filament on DNA at oriC.</text>
</comment>
<comment type="subcellular location">
    <subcellularLocation>
        <location evidence="1">Cytoplasm</location>
    </subcellularLocation>
</comment>
<comment type="domain">
    <text evidence="1">Domain I is involved in oligomerization and binding regulators, domain II is flexibile and of varying length in different bacteria, domain III forms the AAA+ region, while domain IV binds dsDNA.</text>
</comment>
<comment type="similarity">
    <text evidence="1">Belongs to the DnaA family.</text>
</comment>
<reference key="1">
    <citation type="journal article" date="2001" name="Lancet">
        <title>Whole genome sequencing of meticillin-resistant Staphylococcus aureus.</title>
        <authorList>
            <person name="Kuroda M."/>
            <person name="Ohta T."/>
            <person name="Uchiyama I."/>
            <person name="Baba T."/>
            <person name="Yuzawa H."/>
            <person name="Kobayashi I."/>
            <person name="Cui L."/>
            <person name="Oguchi A."/>
            <person name="Aoki K."/>
            <person name="Nagai Y."/>
            <person name="Lian J.-Q."/>
            <person name="Ito T."/>
            <person name="Kanamori M."/>
            <person name="Matsumaru H."/>
            <person name="Maruyama A."/>
            <person name="Murakami H."/>
            <person name="Hosoyama A."/>
            <person name="Mizutani-Ui Y."/>
            <person name="Takahashi N.K."/>
            <person name="Sawano T."/>
            <person name="Inoue R."/>
            <person name="Kaito C."/>
            <person name="Sekimizu K."/>
            <person name="Hirakawa H."/>
            <person name="Kuhara S."/>
            <person name="Goto S."/>
            <person name="Yabuzaki J."/>
            <person name="Kanehisa M."/>
            <person name="Yamashita A."/>
            <person name="Oshima K."/>
            <person name="Furuya K."/>
            <person name="Yoshino C."/>
            <person name="Shiba T."/>
            <person name="Hattori M."/>
            <person name="Ogasawara N."/>
            <person name="Hayashi H."/>
            <person name="Hiramatsu K."/>
        </authorList>
    </citation>
    <scope>NUCLEOTIDE SEQUENCE [LARGE SCALE GENOMIC DNA]</scope>
    <source>
        <strain>Mu50 / ATCC 700699</strain>
    </source>
</reference>
<name>DNAA_STAAM</name>
<keyword id="KW-0067">ATP-binding</keyword>
<keyword id="KW-0963">Cytoplasm</keyword>
<keyword id="KW-0235">DNA replication</keyword>
<keyword id="KW-0238">DNA-binding</keyword>
<keyword id="KW-0446">Lipid-binding</keyword>
<keyword id="KW-0547">Nucleotide-binding</keyword>
<sequence>MSEKEIWEKVLEIAQEKLSAVSYSTFLKDTELYTIKDGEAIVLSSIPFNANWLNQQYAEIIQAILFDVVGYEVKPHFITTEELANYSNNETATPKETTKPSTETTEDNHVLGREQFNAHNTFDTFVIGPGNRFPHAASLAVAEAPAKAYNPLFIYGGVGLGKTHLMHAIGHHVLDNNPDAKVIYTSSEKFTNEFIKSIRDNEGEAFRERYRNIDVLLIDDIQFIQNKVQTQEEFFYTFNELHQNNKQIVISSDRPPKEIAQLEDRLRSRFEWGLIVDITPPDYETRMAILQKKIEEEKLDIPPEALNYIANQIQSNIRELEGALTRLLAYSQLLGKPITTELTAEALKDIIQAPKSKKITIQDIQKIVGQYYNVRIEDFSAKKRTKSIAYPRQIAMYLSRELTDFSLPKIGEEFGGRDHTTVIHAHEKISKDLKEDPIFKQEVENLEKEIRNV</sequence>
<dbReference type="EMBL" id="BA000017">
    <property type="protein sequence ID" value="BAB56163.1"/>
    <property type="molecule type" value="Genomic_DNA"/>
</dbReference>
<dbReference type="RefSeq" id="WP_001290433.1">
    <property type="nucleotide sequence ID" value="NC_002758.2"/>
</dbReference>
<dbReference type="SMR" id="P68865"/>
<dbReference type="KEGG" id="sav:SAV0001"/>
<dbReference type="HOGENOM" id="CLU_026910_3_1_9"/>
<dbReference type="PhylomeDB" id="P68865"/>
<dbReference type="Proteomes" id="UP000002481">
    <property type="component" value="Chromosome"/>
</dbReference>
<dbReference type="GO" id="GO:0005737">
    <property type="term" value="C:cytoplasm"/>
    <property type="evidence" value="ECO:0007669"/>
    <property type="project" value="UniProtKB-SubCell"/>
</dbReference>
<dbReference type="GO" id="GO:0005886">
    <property type="term" value="C:plasma membrane"/>
    <property type="evidence" value="ECO:0007669"/>
    <property type="project" value="TreeGrafter"/>
</dbReference>
<dbReference type="GO" id="GO:0005524">
    <property type="term" value="F:ATP binding"/>
    <property type="evidence" value="ECO:0007669"/>
    <property type="project" value="UniProtKB-UniRule"/>
</dbReference>
<dbReference type="GO" id="GO:0016887">
    <property type="term" value="F:ATP hydrolysis activity"/>
    <property type="evidence" value="ECO:0007669"/>
    <property type="project" value="InterPro"/>
</dbReference>
<dbReference type="GO" id="GO:0003688">
    <property type="term" value="F:DNA replication origin binding"/>
    <property type="evidence" value="ECO:0007669"/>
    <property type="project" value="UniProtKB-UniRule"/>
</dbReference>
<dbReference type="GO" id="GO:0008289">
    <property type="term" value="F:lipid binding"/>
    <property type="evidence" value="ECO:0007669"/>
    <property type="project" value="UniProtKB-KW"/>
</dbReference>
<dbReference type="GO" id="GO:0006270">
    <property type="term" value="P:DNA replication initiation"/>
    <property type="evidence" value="ECO:0007669"/>
    <property type="project" value="UniProtKB-UniRule"/>
</dbReference>
<dbReference type="GO" id="GO:0006275">
    <property type="term" value="P:regulation of DNA replication"/>
    <property type="evidence" value="ECO:0007669"/>
    <property type="project" value="UniProtKB-UniRule"/>
</dbReference>
<dbReference type="CDD" id="cd00009">
    <property type="entry name" value="AAA"/>
    <property type="match status" value="1"/>
</dbReference>
<dbReference type="CDD" id="cd06571">
    <property type="entry name" value="Bac_DnaA_C"/>
    <property type="match status" value="1"/>
</dbReference>
<dbReference type="FunFam" id="1.10.1750.10:FF:000003">
    <property type="entry name" value="Chromosomal replication initiator protein DnaA"/>
    <property type="match status" value="1"/>
</dbReference>
<dbReference type="FunFam" id="1.10.8.60:FF:000003">
    <property type="entry name" value="Chromosomal replication initiator protein DnaA"/>
    <property type="match status" value="1"/>
</dbReference>
<dbReference type="FunFam" id="3.40.50.300:FF:000150">
    <property type="entry name" value="Chromosomal replication initiator protein DnaA"/>
    <property type="match status" value="1"/>
</dbReference>
<dbReference type="Gene3D" id="1.10.1750.10">
    <property type="match status" value="1"/>
</dbReference>
<dbReference type="Gene3D" id="1.10.8.60">
    <property type="match status" value="1"/>
</dbReference>
<dbReference type="Gene3D" id="3.30.300.180">
    <property type="match status" value="1"/>
</dbReference>
<dbReference type="Gene3D" id="3.40.50.300">
    <property type="entry name" value="P-loop containing nucleotide triphosphate hydrolases"/>
    <property type="match status" value="1"/>
</dbReference>
<dbReference type="HAMAP" id="MF_00377">
    <property type="entry name" value="DnaA_bact"/>
    <property type="match status" value="1"/>
</dbReference>
<dbReference type="InterPro" id="IPR003593">
    <property type="entry name" value="AAA+_ATPase"/>
</dbReference>
<dbReference type="InterPro" id="IPR001957">
    <property type="entry name" value="Chromosome_initiator_DnaA"/>
</dbReference>
<dbReference type="InterPro" id="IPR020591">
    <property type="entry name" value="Chromosome_initiator_DnaA-like"/>
</dbReference>
<dbReference type="InterPro" id="IPR018312">
    <property type="entry name" value="Chromosome_initiator_DnaA_CS"/>
</dbReference>
<dbReference type="InterPro" id="IPR013159">
    <property type="entry name" value="DnaA_C"/>
</dbReference>
<dbReference type="InterPro" id="IPR013317">
    <property type="entry name" value="DnaA_dom"/>
</dbReference>
<dbReference type="InterPro" id="IPR024633">
    <property type="entry name" value="DnaA_N_dom"/>
</dbReference>
<dbReference type="InterPro" id="IPR038454">
    <property type="entry name" value="DnaA_N_sf"/>
</dbReference>
<dbReference type="InterPro" id="IPR027417">
    <property type="entry name" value="P-loop_NTPase"/>
</dbReference>
<dbReference type="InterPro" id="IPR010921">
    <property type="entry name" value="Trp_repressor/repl_initiator"/>
</dbReference>
<dbReference type="NCBIfam" id="TIGR00362">
    <property type="entry name" value="DnaA"/>
    <property type="match status" value="1"/>
</dbReference>
<dbReference type="PANTHER" id="PTHR30050">
    <property type="entry name" value="CHROMOSOMAL REPLICATION INITIATOR PROTEIN DNAA"/>
    <property type="match status" value="1"/>
</dbReference>
<dbReference type="PANTHER" id="PTHR30050:SF2">
    <property type="entry name" value="CHROMOSOMAL REPLICATION INITIATOR PROTEIN DNAA"/>
    <property type="match status" value="1"/>
</dbReference>
<dbReference type="Pfam" id="PF00308">
    <property type="entry name" value="Bac_DnaA"/>
    <property type="match status" value="1"/>
</dbReference>
<dbReference type="Pfam" id="PF08299">
    <property type="entry name" value="Bac_DnaA_C"/>
    <property type="match status" value="1"/>
</dbReference>
<dbReference type="Pfam" id="PF11638">
    <property type="entry name" value="DnaA_N"/>
    <property type="match status" value="1"/>
</dbReference>
<dbReference type="PRINTS" id="PR00051">
    <property type="entry name" value="DNAA"/>
</dbReference>
<dbReference type="SMART" id="SM00382">
    <property type="entry name" value="AAA"/>
    <property type="match status" value="1"/>
</dbReference>
<dbReference type="SMART" id="SM00760">
    <property type="entry name" value="Bac_DnaA_C"/>
    <property type="match status" value="1"/>
</dbReference>
<dbReference type="SUPFAM" id="SSF52540">
    <property type="entry name" value="P-loop containing nucleoside triphosphate hydrolases"/>
    <property type="match status" value="1"/>
</dbReference>
<dbReference type="SUPFAM" id="SSF48295">
    <property type="entry name" value="TrpR-like"/>
    <property type="match status" value="1"/>
</dbReference>
<dbReference type="PROSITE" id="PS01008">
    <property type="entry name" value="DNAA"/>
    <property type="match status" value="1"/>
</dbReference>
<protein>
    <recommendedName>
        <fullName evidence="1">Chromosomal replication initiator protein DnaA</fullName>
    </recommendedName>
</protein>
<evidence type="ECO:0000255" key="1">
    <source>
        <dbReference type="HAMAP-Rule" id="MF_00377"/>
    </source>
</evidence>
<organism>
    <name type="scientific">Staphylococcus aureus (strain Mu50 / ATCC 700699)</name>
    <dbReference type="NCBI Taxonomy" id="158878"/>
    <lineage>
        <taxon>Bacteria</taxon>
        <taxon>Bacillati</taxon>
        <taxon>Bacillota</taxon>
        <taxon>Bacilli</taxon>
        <taxon>Bacillales</taxon>
        <taxon>Staphylococcaceae</taxon>
        <taxon>Staphylococcus</taxon>
    </lineage>
</organism>
<accession>P68865</accession>
<accession>P49994</accession>
<proteinExistence type="inferred from homology"/>
<feature type="chain" id="PRO_0000114259" description="Chromosomal replication initiator protein DnaA">
    <location>
        <begin position="1"/>
        <end position="453"/>
    </location>
</feature>
<feature type="region of interest" description="Domain I, interacts with DnaA modulators" evidence="1">
    <location>
        <begin position="1"/>
        <end position="71"/>
    </location>
</feature>
<feature type="region of interest" description="Domain II" evidence="1">
    <location>
        <begin position="71"/>
        <end position="114"/>
    </location>
</feature>
<feature type="region of interest" description="Domain III, AAA+ region" evidence="1">
    <location>
        <begin position="115"/>
        <end position="331"/>
    </location>
</feature>
<feature type="region of interest" description="Domain IV, binds dsDNA" evidence="1">
    <location>
        <begin position="332"/>
        <end position="453"/>
    </location>
</feature>
<feature type="binding site" evidence="1">
    <location>
        <position position="159"/>
    </location>
    <ligand>
        <name>ATP</name>
        <dbReference type="ChEBI" id="CHEBI:30616"/>
    </ligand>
</feature>
<feature type="binding site" evidence="1">
    <location>
        <position position="161"/>
    </location>
    <ligand>
        <name>ATP</name>
        <dbReference type="ChEBI" id="CHEBI:30616"/>
    </ligand>
</feature>
<feature type="binding site" evidence="1">
    <location>
        <position position="162"/>
    </location>
    <ligand>
        <name>ATP</name>
        <dbReference type="ChEBI" id="CHEBI:30616"/>
    </ligand>
</feature>
<feature type="binding site" evidence="1">
    <location>
        <position position="163"/>
    </location>
    <ligand>
        <name>ATP</name>
        <dbReference type="ChEBI" id="CHEBI:30616"/>
    </ligand>
</feature>